<name>OX2G_HUMAN</name>
<keyword id="KW-0025">Alternative splicing</keyword>
<keyword id="KW-1003">Cell membrane</keyword>
<keyword id="KW-1015">Disulfide bond</keyword>
<keyword id="KW-0325">Glycoprotein</keyword>
<keyword id="KW-0393">Immunoglobulin domain</keyword>
<keyword id="KW-0472">Membrane</keyword>
<keyword id="KW-1267">Proteomics identification</keyword>
<keyword id="KW-1185">Reference proteome</keyword>
<keyword id="KW-0732">Signal</keyword>
<keyword id="KW-0812">Transmembrane</keyword>
<keyword id="KW-1133">Transmembrane helix</keyword>
<reference key="1">
    <citation type="submission" date="2004-04" db="EMBL/GenBank/DDBJ databases">
        <authorList>
            <person name="Hou Z.F."/>
            <person name="Gao S."/>
            <person name="Zheng Y.C."/>
            <person name="Hao B."/>
            <person name="Wang W.Z."/>
            <person name="Bu L.S."/>
            <person name="Yang S.J."/>
            <person name="Hou R.Z."/>
            <person name="Gao S."/>
        </authorList>
    </citation>
    <scope>NUCLEOTIDE SEQUENCE [MRNA] (ISOFORM 2)</scope>
    <scope>VARIANT CYS-11</scope>
</reference>
<reference key="2">
    <citation type="submission" date="1998-05" db="EMBL/GenBank/DDBJ databases">
        <authorList>
            <person name="Mao Y.M."/>
            <person name="Xie Y."/>
            <person name="Zheng Z.H."/>
        </authorList>
    </citation>
    <scope>NUCLEOTIDE SEQUENCE [LARGE SCALE MRNA] (ISOFORM 2)</scope>
    <source>
        <tissue>Fetal brain</tissue>
    </source>
</reference>
<reference key="3">
    <citation type="journal article" date="2004" name="Nat. Genet.">
        <title>Complete sequencing and characterization of 21,243 full-length human cDNAs.</title>
        <authorList>
            <person name="Ota T."/>
            <person name="Suzuki Y."/>
            <person name="Nishikawa T."/>
            <person name="Otsuki T."/>
            <person name="Sugiyama T."/>
            <person name="Irie R."/>
            <person name="Wakamatsu A."/>
            <person name="Hayashi K."/>
            <person name="Sato H."/>
            <person name="Nagai K."/>
            <person name="Kimura K."/>
            <person name="Makita H."/>
            <person name="Sekine M."/>
            <person name="Obayashi M."/>
            <person name="Nishi T."/>
            <person name="Shibahara T."/>
            <person name="Tanaka T."/>
            <person name="Ishii S."/>
            <person name="Yamamoto J."/>
            <person name="Saito K."/>
            <person name="Kawai Y."/>
            <person name="Isono Y."/>
            <person name="Nakamura Y."/>
            <person name="Nagahari K."/>
            <person name="Murakami K."/>
            <person name="Yasuda T."/>
            <person name="Iwayanagi T."/>
            <person name="Wagatsuma M."/>
            <person name="Shiratori A."/>
            <person name="Sudo H."/>
            <person name="Hosoiri T."/>
            <person name="Kaku Y."/>
            <person name="Kodaira H."/>
            <person name="Kondo H."/>
            <person name="Sugawara M."/>
            <person name="Takahashi M."/>
            <person name="Kanda K."/>
            <person name="Yokoi T."/>
            <person name="Furuya T."/>
            <person name="Kikkawa E."/>
            <person name="Omura Y."/>
            <person name="Abe K."/>
            <person name="Kamihara K."/>
            <person name="Katsuta N."/>
            <person name="Sato K."/>
            <person name="Tanikawa M."/>
            <person name="Yamazaki M."/>
            <person name="Ninomiya K."/>
            <person name="Ishibashi T."/>
            <person name="Yamashita H."/>
            <person name="Murakawa K."/>
            <person name="Fujimori K."/>
            <person name="Tanai H."/>
            <person name="Kimata M."/>
            <person name="Watanabe M."/>
            <person name="Hiraoka S."/>
            <person name="Chiba Y."/>
            <person name="Ishida S."/>
            <person name="Ono Y."/>
            <person name="Takiguchi S."/>
            <person name="Watanabe S."/>
            <person name="Yosida M."/>
            <person name="Hotuta T."/>
            <person name="Kusano J."/>
            <person name="Kanehori K."/>
            <person name="Takahashi-Fujii A."/>
            <person name="Hara H."/>
            <person name="Tanase T.-O."/>
            <person name="Nomura Y."/>
            <person name="Togiya S."/>
            <person name="Komai F."/>
            <person name="Hara R."/>
            <person name="Takeuchi K."/>
            <person name="Arita M."/>
            <person name="Imose N."/>
            <person name="Musashino K."/>
            <person name="Yuuki H."/>
            <person name="Oshima A."/>
            <person name="Sasaki N."/>
            <person name="Aotsuka S."/>
            <person name="Yoshikawa Y."/>
            <person name="Matsunawa H."/>
            <person name="Ichihara T."/>
            <person name="Shiohata N."/>
            <person name="Sano S."/>
            <person name="Moriya S."/>
            <person name="Momiyama H."/>
            <person name="Satoh N."/>
            <person name="Takami S."/>
            <person name="Terashima Y."/>
            <person name="Suzuki O."/>
            <person name="Nakagawa S."/>
            <person name="Senoh A."/>
            <person name="Mizoguchi H."/>
            <person name="Goto Y."/>
            <person name="Shimizu F."/>
            <person name="Wakebe H."/>
            <person name="Hishigaki H."/>
            <person name="Watanabe T."/>
            <person name="Sugiyama A."/>
            <person name="Takemoto M."/>
            <person name="Kawakami B."/>
            <person name="Yamazaki M."/>
            <person name="Watanabe K."/>
            <person name="Kumagai A."/>
            <person name="Itakura S."/>
            <person name="Fukuzumi Y."/>
            <person name="Fujimori Y."/>
            <person name="Komiyama M."/>
            <person name="Tashiro H."/>
            <person name="Tanigami A."/>
            <person name="Fujiwara T."/>
            <person name="Ono T."/>
            <person name="Yamada K."/>
            <person name="Fujii Y."/>
            <person name="Ozaki K."/>
            <person name="Hirao M."/>
            <person name="Ohmori Y."/>
            <person name="Kawabata A."/>
            <person name="Hikiji T."/>
            <person name="Kobatake N."/>
            <person name="Inagaki H."/>
            <person name="Ikema Y."/>
            <person name="Okamoto S."/>
            <person name="Okitani R."/>
            <person name="Kawakami T."/>
            <person name="Noguchi S."/>
            <person name="Itoh T."/>
            <person name="Shigeta K."/>
            <person name="Senba T."/>
            <person name="Matsumura K."/>
            <person name="Nakajima Y."/>
            <person name="Mizuno T."/>
            <person name="Morinaga M."/>
            <person name="Sasaki M."/>
            <person name="Togashi T."/>
            <person name="Oyama M."/>
            <person name="Hata H."/>
            <person name="Watanabe M."/>
            <person name="Komatsu T."/>
            <person name="Mizushima-Sugano J."/>
            <person name="Satoh T."/>
            <person name="Shirai Y."/>
            <person name="Takahashi Y."/>
            <person name="Nakagawa K."/>
            <person name="Okumura K."/>
            <person name="Nagase T."/>
            <person name="Nomura N."/>
            <person name="Kikuchi H."/>
            <person name="Masuho Y."/>
            <person name="Yamashita R."/>
            <person name="Nakai K."/>
            <person name="Yada T."/>
            <person name="Nakamura Y."/>
            <person name="Ohara O."/>
            <person name="Isogai T."/>
            <person name="Sugano S."/>
        </authorList>
    </citation>
    <scope>NUCLEOTIDE SEQUENCE [LARGE SCALE MRNA] (ISOFORM 3)</scope>
    <scope>VARIANT CYS-11</scope>
    <source>
        <tissue>Brain</tissue>
    </source>
</reference>
<reference key="4">
    <citation type="journal article" date="2005" name="DNA Res.">
        <title>Signal sequence and keyword trap in silico for selection of full-length human cDNAs encoding secretion or membrane proteins from oligo-capped cDNA libraries.</title>
        <authorList>
            <person name="Otsuki T."/>
            <person name="Ota T."/>
            <person name="Nishikawa T."/>
            <person name="Hayashi K."/>
            <person name="Suzuki Y."/>
            <person name="Yamamoto J."/>
            <person name="Wakamatsu A."/>
            <person name="Kimura K."/>
            <person name="Sakamoto K."/>
            <person name="Hatano N."/>
            <person name="Kawai Y."/>
            <person name="Ishii S."/>
            <person name="Saito K."/>
            <person name="Kojima S."/>
            <person name="Sugiyama T."/>
            <person name="Ono T."/>
            <person name="Okano K."/>
            <person name="Yoshikawa Y."/>
            <person name="Aotsuka S."/>
            <person name="Sasaki N."/>
            <person name="Hattori A."/>
            <person name="Okumura K."/>
            <person name="Nagai K."/>
            <person name="Sugano S."/>
            <person name="Isogai T."/>
        </authorList>
    </citation>
    <scope>NUCLEOTIDE SEQUENCE [LARGE SCALE MRNA] (ISOFORM 2)</scope>
    <scope>VARIANT CYS-11</scope>
</reference>
<reference key="5">
    <citation type="journal article" date="2006" name="Nature">
        <title>The DNA sequence, annotation and analysis of human chromosome 3.</title>
        <authorList>
            <person name="Muzny D.M."/>
            <person name="Scherer S.E."/>
            <person name="Kaul R."/>
            <person name="Wang J."/>
            <person name="Yu J."/>
            <person name="Sudbrak R."/>
            <person name="Buhay C.J."/>
            <person name="Chen R."/>
            <person name="Cree A."/>
            <person name="Ding Y."/>
            <person name="Dugan-Rocha S."/>
            <person name="Gill R."/>
            <person name="Gunaratne P."/>
            <person name="Harris R.A."/>
            <person name="Hawes A.C."/>
            <person name="Hernandez J."/>
            <person name="Hodgson A.V."/>
            <person name="Hume J."/>
            <person name="Jackson A."/>
            <person name="Khan Z.M."/>
            <person name="Kovar-Smith C."/>
            <person name="Lewis L.R."/>
            <person name="Lozado R.J."/>
            <person name="Metzker M.L."/>
            <person name="Milosavljevic A."/>
            <person name="Miner G.R."/>
            <person name="Morgan M.B."/>
            <person name="Nazareth L.V."/>
            <person name="Scott G."/>
            <person name="Sodergren E."/>
            <person name="Song X.-Z."/>
            <person name="Steffen D."/>
            <person name="Wei S."/>
            <person name="Wheeler D.A."/>
            <person name="Wright M.W."/>
            <person name="Worley K.C."/>
            <person name="Yuan Y."/>
            <person name="Zhang Z."/>
            <person name="Adams C.Q."/>
            <person name="Ansari-Lari M.A."/>
            <person name="Ayele M."/>
            <person name="Brown M.J."/>
            <person name="Chen G."/>
            <person name="Chen Z."/>
            <person name="Clendenning J."/>
            <person name="Clerc-Blankenburg K.P."/>
            <person name="Chen R."/>
            <person name="Chen Z."/>
            <person name="Davis C."/>
            <person name="Delgado O."/>
            <person name="Dinh H.H."/>
            <person name="Dong W."/>
            <person name="Draper H."/>
            <person name="Ernst S."/>
            <person name="Fu G."/>
            <person name="Gonzalez-Garay M.L."/>
            <person name="Garcia D.K."/>
            <person name="Gillett W."/>
            <person name="Gu J."/>
            <person name="Hao B."/>
            <person name="Haugen E."/>
            <person name="Havlak P."/>
            <person name="He X."/>
            <person name="Hennig S."/>
            <person name="Hu S."/>
            <person name="Huang W."/>
            <person name="Jackson L.R."/>
            <person name="Jacob L.S."/>
            <person name="Kelly S.H."/>
            <person name="Kube M."/>
            <person name="Levy R."/>
            <person name="Li Z."/>
            <person name="Liu B."/>
            <person name="Liu J."/>
            <person name="Liu W."/>
            <person name="Lu J."/>
            <person name="Maheshwari M."/>
            <person name="Nguyen B.-V."/>
            <person name="Okwuonu G.O."/>
            <person name="Palmeiri A."/>
            <person name="Pasternak S."/>
            <person name="Perez L.M."/>
            <person name="Phelps K.A."/>
            <person name="Plopper F.J."/>
            <person name="Qiang B."/>
            <person name="Raymond C."/>
            <person name="Rodriguez R."/>
            <person name="Saenphimmachak C."/>
            <person name="Santibanez J."/>
            <person name="Shen H."/>
            <person name="Shen Y."/>
            <person name="Subramanian S."/>
            <person name="Tabor P.E."/>
            <person name="Verduzco D."/>
            <person name="Waldron L."/>
            <person name="Wang J."/>
            <person name="Wang J."/>
            <person name="Wang Q."/>
            <person name="Williams G.A."/>
            <person name="Wong G.K.-S."/>
            <person name="Yao Z."/>
            <person name="Zhang J."/>
            <person name="Zhang X."/>
            <person name="Zhao G."/>
            <person name="Zhou J."/>
            <person name="Zhou Y."/>
            <person name="Nelson D."/>
            <person name="Lehrach H."/>
            <person name="Reinhardt R."/>
            <person name="Naylor S.L."/>
            <person name="Yang H."/>
            <person name="Olson M."/>
            <person name="Weinstock G."/>
            <person name="Gibbs R.A."/>
        </authorList>
    </citation>
    <scope>NUCLEOTIDE SEQUENCE [LARGE SCALE GENOMIC DNA]</scope>
</reference>
<reference key="6">
    <citation type="submission" date="2005-09" db="EMBL/GenBank/DDBJ databases">
        <authorList>
            <person name="Mural R.J."/>
            <person name="Istrail S."/>
            <person name="Sutton G.G."/>
            <person name="Florea L."/>
            <person name="Halpern A.L."/>
            <person name="Mobarry C.M."/>
            <person name="Lippert R."/>
            <person name="Walenz B."/>
            <person name="Shatkay H."/>
            <person name="Dew I."/>
            <person name="Miller J.R."/>
            <person name="Flanigan M.J."/>
            <person name="Edwards N.J."/>
            <person name="Bolanos R."/>
            <person name="Fasulo D."/>
            <person name="Halldorsson B.V."/>
            <person name="Hannenhalli S."/>
            <person name="Turner R."/>
            <person name="Yooseph S."/>
            <person name="Lu F."/>
            <person name="Nusskern D.R."/>
            <person name="Shue B.C."/>
            <person name="Zheng X.H."/>
            <person name="Zhong F."/>
            <person name="Delcher A.L."/>
            <person name="Huson D.H."/>
            <person name="Kravitz S.A."/>
            <person name="Mouchard L."/>
            <person name="Reinert K."/>
            <person name="Remington K.A."/>
            <person name="Clark A.G."/>
            <person name="Waterman M.S."/>
            <person name="Eichler E.E."/>
            <person name="Adams M.D."/>
            <person name="Hunkapiller M.W."/>
            <person name="Myers E.W."/>
            <person name="Venter J.C."/>
        </authorList>
    </citation>
    <scope>NUCLEOTIDE SEQUENCE [LARGE SCALE GENOMIC DNA]</scope>
</reference>
<reference key="7">
    <citation type="journal article" date="2004" name="Genome Res.">
        <title>The status, quality, and expansion of the NIH full-length cDNA project: the Mammalian Gene Collection (MGC).</title>
        <authorList>
            <consortium name="The MGC Project Team"/>
        </authorList>
    </citation>
    <scope>NUCLEOTIDE SEQUENCE [LARGE SCALE MRNA] (ISOFORM 2)</scope>
    <scope>VARIANT CYS-11</scope>
    <source>
        <tissue>Brain</tissue>
    </source>
</reference>
<reference key="8">
    <citation type="journal article" date="1987" name="Immunogenetics">
        <title>Characterization of the human homolog of the rat MRC OX-2 membrane glycoprotein.</title>
        <authorList>
            <person name="McCaughan G.W."/>
            <person name="Clark M.J."/>
            <person name="Barclay A.N."/>
        </authorList>
    </citation>
    <scope>NUCLEOTIDE SEQUENCE [GENOMIC DNA] OF 5-278 (ISOFORM 1)</scope>
    <scope>VARIANT THR-46</scope>
    <source>
        <tissue>Blood</tissue>
    </source>
</reference>
<feature type="signal peptide" evidence="1">
    <location>
        <begin position="1"/>
        <end position="30"/>
    </location>
</feature>
<feature type="chain" id="PRO_0000015124" description="OX-2 membrane glycoprotein">
    <location>
        <begin position="31"/>
        <end position="278"/>
    </location>
</feature>
<feature type="topological domain" description="Extracellular" evidence="1">
    <location>
        <begin position="31"/>
        <end position="232"/>
    </location>
</feature>
<feature type="transmembrane region" description="Helical" evidence="1">
    <location>
        <begin position="233"/>
        <end position="259"/>
    </location>
</feature>
<feature type="topological domain" description="Cytoplasmic" evidence="1">
    <location>
        <begin position="260"/>
        <end position="278"/>
    </location>
</feature>
<feature type="domain" description="Ig-like V-type">
    <location>
        <begin position="31"/>
        <end position="141"/>
    </location>
</feature>
<feature type="domain" description="Ig-like C2-type">
    <location>
        <begin position="142"/>
        <end position="232"/>
    </location>
</feature>
<feature type="glycosylation site" description="N-linked (GlcNAc...) asparagine" evidence="1">
    <location>
        <position position="95"/>
    </location>
</feature>
<feature type="glycosylation site" description="N-linked (GlcNAc...) asparagine" evidence="1">
    <location>
        <position position="103"/>
    </location>
</feature>
<feature type="glycosylation site" description="N-linked (GlcNAc...) asparagine" evidence="1">
    <location>
        <position position="110"/>
    </location>
</feature>
<feature type="glycosylation site" description="N-linked (GlcNAc...) asparagine" evidence="1">
    <location>
        <position position="157"/>
    </location>
</feature>
<feature type="glycosylation site" description="N-linked (GlcNAc...) asparagine" evidence="1">
    <location>
        <position position="181"/>
    </location>
</feature>
<feature type="glycosylation site" description="N-linked (GlcNAc...) asparagine" evidence="1">
    <location>
        <position position="190"/>
    </location>
</feature>
<feature type="disulfide bond" evidence="2">
    <location>
        <begin position="51"/>
        <end position="121"/>
    </location>
</feature>
<feature type="disulfide bond" evidence="2">
    <location>
        <begin position="118"/>
        <end position="136"/>
    </location>
</feature>
<feature type="disulfide bond" evidence="2">
    <location>
        <begin position="160"/>
        <end position="214"/>
    </location>
</feature>
<feature type="splice variant" id="VSP_040027" description="In isoform 3." evidence="8">
    <original>L</original>
    <variation>LTLTRTIGGPLLTATLLGKTTINDYQ</variation>
    <location>
        <position position="4"/>
    </location>
</feature>
<feature type="splice variant" id="VSP_002613" description="In isoform 2 and isoform 3." evidence="8 9 10 11 12">
    <original>GELSQGVQKMT</original>
    <variation>EP</variation>
    <location>
        <begin position="268"/>
        <end position="278"/>
    </location>
</feature>
<feature type="sequence variant" id="VAR_027605" description="In dbSNP:rs1131199." evidence="3 4 5 7">
    <original>S</original>
    <variation>C</variation>
    <location>
        <position position="11"/>
    </location>
</feature>
<feature type="sequence variant" id="VAR_027606" description="In dbSNP:rs2272022." evidence="6">
    <original>P</original>
    <variation>T</variation>
    <location>
        <position position="46"/>
    </location>
</feature>
<feature type="sequence variant" id="VAR_056110" description="In dbSNP:rs35465733.">
    <original>V</original>
    <variation>G</variation>
    <location>
        <position position="76"/>
    </location>
</feature>
<feature type="sequence conflict" description="In Ref. 1; AAT37533." evidence="13" ref="1">
    <original>N</original>
    <variation>D</variation>
    <location>
        <position position="181"/>
    </location>
</feature>
<feature type="sequence conflict" description="In Ref. 1; AAT37533." evidence="13" ref="1">
    <original>F</original>
    <variation>S</variation>
    <location>
        <position position="225"/>
    </location>
</feature>
<gene>
    <name type="primary">CD200</name>
    <name type="synonym">MOX1</name>
    <name type="synonym">MOX2</name>
    <name type="ORF">My033</name>
</gene>
<proteinExistence type="evidence at protein level"/>
<comment type="function">
    <text>Costimulates T-cell proliferation. May regulate myeloid cell activity in a variety of tissues.</text>
</comment>
<comment type="subunit">
    <text>CD200 and CD200R1 interact via their respective N-terminal Ig-like domains.</text>
</comment>
<comment type="interaction">
    <interactant intactId="EBI-3910563">
        <id>P41217</id>
    </interactant>
    <interactant intactId="EBI-4314412">
        <id>Q8TD46</id>
        <label>CD200R1</label>
    </interactant>
    <organismsDiffer>false</organismsDiffer>
    <experiments>2</experiments>
</comment>
<comment type="subcellular location">
    <subcellularLocation>
        <location>Cell membrane</location>
        <topology>Single-pass type I membrane protein</topology>
    </subcellularLocation>
</comment>
<comment type="alternative products">
    <event type="alternative splicing"/>
    <isoform>
        <id>P41217-1</id>
        <name>1</name>
        <sequence type="displayed"/>
    </isoform>
    <isoform>
        <id>P41217-2</id>
        <name>2</name>
        <sequence type="described" ref="VSP_002613"/>
    </isoform>
    <isoform>
        <id>P41217-3</id>
        <name>3</name>
        <sequence type="described" ref="VSP_040027 VSP_002613"/>
    </isoform>
</comment>
<comment type="online information" name="Atlas of Genetics and Cytogenetics in Oncology and Haematology">
    <link uri="https://atlasgeneticsoncology.org/gene/44381/CD200"/>
</comment>
<dbReference type="EMBL" id="AY603771">
    <property type="protein sequence ID" value="AAT37533.1"/>
    <property type="molecule type" value="mRNA"/>
</dbReference>
<dbReference type="EMBL" id="AF063591">
    <property type="protein sequence ID" value="AAG43150.1"/>
    <property type="molecule type" value="mRNA"/>
</dbReference>
<dbReference type="EMBL" id="AK297194">
    <property type="protein sequence ID" value="BAG59681.1"/>
    <property type="molecule type" value="mRNA"/>
</dbReference>
<dbReference type="EMBL" id="AK074972">
    <property type="protein sequence ID" value="BAG52043.1"/>
    <property type="molecule type" value="mRNA"/>
</dbReference>
<dbReference type="EMBL" id="AC112487">
    <property type="status" value="NOT_ANNOTATED_CDS"/>
    <property type="molecule type" value="Genomic_DNA"/>
</dbReference>
<dbReference type="EMBL" id="CH471052">
    <property type="protein sequence ID" value="EAW79672.1"/>
    <property type="molecule type" value="Genomic_DNA"/>
</dbReference>
<dbReference type="EMBL" id="CH471052">
    <property type="protein sequence ID" value="EAW79676.1"/>
    <property type="molecule type" value="Genomic_DNA"/>
</dbReference>
<dbReference type="EMBL" id="BC022522">
    <property type="protein sequence ID" value="AAH22522.1"/>
    <property type="molecule type" value="mRNA"/>
</dbReference>
<dbReference type="EMBL" id="BC031103">
    <property type="protein sequence ID" value="AAH31103.1"/>
    <property type="molecule type" value="mRNA"/>
</dbReference>
<dbReference type="EMBL" id="X05323">
    <property type="protein sequence ID" value="CAA28943.1"/>
    <property type="molecule type" value="Genomic_DNA"/>
</dbReference>
<dbReference type="EMBL" id="X05324">
    <property type="protein sequence ID" value="CAA28943.1"/>
    <property type="status" value="JOINED"/>
    <property type="molecule type" value="Genomic_DNA"/>
</dbReference>
<dbReference type="EMBL" id="X05325">
    <property type="protein sequence ID" value="CAA28943.1"/>
    <property type="status" value="JOINED"/>
    <property type="molecule type" value="Genomic_DNA"/>
</dbReference>
<dbReference type="EMBL" id="X05326">
    <property type="protein sequence ID" value="CAA28943.1"/>
    <property type="status" value="JOINED"/>
    <property type="molecule type" value="Genomic_DNA"/>
</dbReference>
<dbReference type="CCDS" id="CCDS2965.1">
    <molecule id="P41217-2"/>
</dbReference>
<dbReference type="CCDS" id="CCDS33818.1">
    <molecule id="P41217-3"/>
</dbReference>
<dbReference type="PIR" id="A47639">
    <property type="entry name" value="A47639"/>
</dbReference>
<dbReference type="RefSeq" id="NP_001004196.2">
    <molecule id="P41217-3"/>
    <property type="nucleotide sequence ID" value="NM_001004196.4"/>
</dbReference>
<dbReference type="RefSeq" id="NP_001305757.1">
    <property type="nucleotide sequence ID" value="NM_001318828.1"/>
</dbReference>
<dbReference type="RefSeq" id="NP_001352780.1">
    <molecule id="P41217-1"/>
    <property type="nucleotide sequence ID" value="NM_001365851.2"/>
</dbReference>
<dbReference type="RefSeq" id="NP_005935.4">
    <molecule id="P41217-2"/>
    <property type="nucleotide sequence ID" value="NM_005944.6"/>
</dbReference>
<dbReference type="RefSeq" id="XP_005247539.1">
    <property type="nucleotide sequence ID" value="XM_005247482.2"/>
</dbReference>
<dbReference type="SMR" id="P41217"/>
<dbReference type="BioGRID" id="110486">
    <property type="interactions" value="8"/>
</dbReference>
<dbReference type="FunCoup" id="P41217">
    <property type="interactions" value="53"/>
</dbReference>
<dbReference type="IntAct" id="P41217">
    <property type="interactions" value="7"/>
</dbReference>
<dbReference type="STRING" id="9606.ENSP00000420298"/>
<dbReference type="ChEMBL" id="CHEMBL3712870"/>
<dbReference type="GlyCosmos" id="P41217">
    <property type="glycosylation" value="6 sites, No reported glycans"/>
</dbReference>
<dbReference type="GlyGen" id="P41217">
    <property type="glycosylation" value="8 sites"/>
</dbReference>
<dbReference type="iPTMnet" id="P41217"/>
<dbReference type="PhosphoSitePlus" id="P41217"/>
<dbReference type="BioMuta" id="CD200"/>
<dbReference type="DMDM" id="311033489"/>
<dbReference type="jPOST" id="P41217"/>
<dbReference type="MassIVE" id="P41217"/>
<dbReference type="PaxDb" id="9606-ENSP00000420298"/>
<dbReference type="PeptideAtlas" id="P41217"/>
<dbReference type="ProteomicsDB" id="55419">
    <molecule id="P41217-1"/>
</dbReference>
<dbReference type="ProteomicsDB" id="55420">
    <molecule id="P41217-2"/>
</dbReference>
<dbReference type="ProteomicsDB" id="55421">
    <molecule id="P41217-3"/>
</dbReference>
<dbReference type="TopDownProteomics" id="P41217-3">
    <molecule id="P41217-3"/>
</dbReference>
<dbReference type="ABCD" id="P41217">
    <property type="antibodies" value="9 sequenced antibodies"/>
</dbReference>
<dbReference type="Antibodypedia" id="16297">
    <property type="antibodies" value="999 antibodies from 41 providers"/>
</dbReference>
<dbReference type="DNASU" id="4345"/>
<dbReference type="Ensembl" id="ENST00000315711.12">
    <molecule id="P41217-2"/>
    <property type="protein sequence ID" value="ENSP00000312766.8"/>
    <property type="gene ID" value="ENSG00000091972.19"/>
</dbReference>
<dbReference type="Ensembl" id="ENST00000473539.5">
    <molecule id="P41217-3"/>
    <property type="protein sequence ID" value="ENSP00000420298.1"/>
    <property type="gene ID" value="ENSG00000091972.19"/>
</dbReference>
<dbReference type="GeneID" id="4345"/>
<dbReference type="KEGG" id="hsa:4345"/>
<dbReference type="MANE-Select" id="ENST00000315711.12">
    <molecule id="P41217-2"/>
    <property type="protein sequence ID" value="ENSP00000312766.8"/>
    <property type="RefSeq nucleotide sequence ID" value="NM_005944.7"/>
    <property type="RefSeq protein sequence ID" value="NP_005935.4"/>
</dbReference>
<dbReference type="UCSC" id="uc003dyw.4">
    <molecule id="P41217-1"/>
    <property type="organism name" value="human"/>
</dbReference>
<dbReference type="AGR" id="HGNC:7203"/>
<dbReference type="CTD" id="4345"/>
<dbReference type="DisGeNET" id="4345"/>
<dbReference type="GeneCards" id="CD200"/>
<dbReference type="HGNC" id="HGNC:7203">
    <property type="gene designation" value="CD200"/>
</dbReference>
<dbReference type="HPA" id="ENSG00000091972">
    <property type="expression patterns" value="Tissue enhanced (brain)"/>
</dbReference>
<dbReference type="MIM" id="155970">
    <property type="type" value="gene"/>
</dbReference>
<dbReference type="neXtProt" id="NX_P41217"/>
<dbReference type="OpenTargets" id="ENSG00000091972"/>
<dbReference type="PharmGKB" id="PA30911"/>
<dbReference type="VEuPathDB" id="HostDB:ENSG00000091972"/>
<dbReference type="eggNOG" id="ENOG502S5DU">
    <property type="taxonomic scope" value="Eukaryota"/>
</dbReference>
<dbReference type="GeneTree" id="ENSGT00530000063970"/>
<dbReference type="InParanoid" id="P41217"/>
<dbReference type="OMA" id="MISWKVS"/>
<dbReference type="OrthoDB" id="8749387at2759"/>
<dbReference type="PAN-GO" id="P41217">
    <property type="GO annotations" value="6 GO annotations based on evolutionary models"/>
</dbReference>
<dbReference type="PhylomeDB" id="P41217"/>
<dbReference type="TreeFam" id="TF334493"/>
<dbReference type="PathwayCommons" id="P41217"/>
<dbReference type="Reactome" id="R-HSA-198933">
    <property type="pathway name" value="Immunoregulatory interactions between a Lymphoid and a non-Lymphoid cell"/>
</dbReference>
<dbReference type="SignaLink" id="P41217"/>
<dbReference type="BioGRID-ORCS" id="4345">
    <property type="hits" value="7 hits in 1145 CRISPR screens"/>
</dbReference>
<dbReference type="ChiTaRS" id="CD200">
    <property type="organism name" value="human"/>
</dbReference>
<dbReference type="GeneWiki" id="CD200"/>
<dbReference type="GenomeRNAi" id="4345"/>
<dbReference type="Pharos" id="P41217">
    <property type="development level" value="Tbio"/>
</dbReference>
<dbReference type="PRO" id="PR:P41217"/>
<dbReference type="Proteomes" id="UP000005640">
    <property type="component" value="Chromosome 3"/>
</dbReference>
<dbReference type="RNAct" id="P41217">
    <property type="molecule type" value="protein"/>
</dbReference>
<dbReference type="Bgee" id="ENSG00000091972">
    <property type="expression patterns" value="Expressed in cortical plate and 183 other cell types or tissues"/>
</dbReference>
<dbReference type="ExpressionAtlas" id="P41217">
    <property type="expression patterns" value="baseline and differential"/>
</dbReference>
<dbReference type="GO" id="GO:0030424">
    <property type="term" value="C:axon"/>
    <property type="evidence" value="ECO:0000314"/>
    <property type="project" value="ARUK-UCL"/>
</dbReference>
<dbReference type="GO" id="GO:0044297">
    <property type="term" value="C:cell body"/>
    <property type="evidence" value="ECO:0000314"/>
    <property type="project" value="ARUK-UCL"/>
</dbReference>
<dbReference type="GO" id="GO:0009986">
    <property type="term" value="C:cell surface"/>
    <property type="evidence" value="ECO:0000314"/>
    <property type="project" value="ARUK-UCL"/>
</dbReference>
<dbReference type="GO" id="GO:0016020">
    <property type="term" value="C:membrane"/>
    <property type="evidence" value="ECO:0000303"/>
    <property type="project" value="ARUK-UCL"/>
</dbReference>
<dbReference type="GO" id="GO:0043005">
    <property type="term" value="C:neuron projection"/>
    <property type="evidence" value="ECO:0000250"/>
    <property type="project" value="ARUK-UCL"/>
</dbReference>
<dbReference type="GO" id="GO:0043025">
    <property type="term" value="C:neuronal cell body"/>
    <property type="evidence" value="ECO:0000314"/>
    <property type="project" value="ARUK-UCL"/>
</dbReference>
<dbReference type="GO" id="GO:0005886">
    <property type="term" value="C:plasma membrane"/>
    <property type="evidence" value="ECO:0000304"/>
    <property type="project" value="Reactome"/>
</dbReference>
<dbReference type="GO" id="GO:0098632">
    <property type="term" value="F:cell-cell adhesion mediator activity"/>
    <property type="evidence" value="ECO:0000318"/>
    <property type="project" value="GO_Central"/>
</dbReference>
<dbReference type="GO" id="GO:0140081">
    <property type="term" value="F:glycosylated region protein binding"/>
    <property type="evidence" value="ECO:0000304"/>
    <property type="project" value="ARUK-UCL"/>
</dbReference>
<dbReference type="GO" id="GO:0086080">
    <property type="term" value="F:protein binding involved in heterotypic cell-cell adhesion"/>
    <property type="evidence" value="ECO:0000250"/>
    <property type="project" value="ARUK-UCL"/>
</dbReference>
<dbReference type="GO" id="GO:0098609">
    <property type="term" value="P:cell-cell adhesion"/>
    <property type="evidence" value="ECO:0000250"/>
    <property type="project" value="ARUK-UCL"/>
</dbReference>
<dbReference type="GO" id="GO:0071222">
    <property type="term" value="P:cellular response to lipopolysaccharide"/>
    <property type="evidence" value="ECO:0000314"/>
    <property type="project" value="ARUK-UCL"/>
</dbReference>
<dbReference type="GO" id="GO:0071346">
    <property type="term" value="P:cellular response to type II interferon"/>
    <property type="evidence" value="ECO:0000314"/>
    <property type="project" value="ARUK-UCL"/>
</dbReference>
<dbReference type="GO" id="GO:0034113">
    <property type="term" value="P:heterotypic cell-cell adhesion"/>
    <property type="evidence" value="ECO:0000316"/>
    <property type="project" value="ARUK-UCL"/>
</dbReference>
<dbReference type="GO" id="GO:0043124">
    <property type="term" value="P:negative regulation of canonical NF-kappaB signal transduction"/>
    <property type="evidence" value="ECO:0000314"/>
    <property type="project" value="ARUK-UCL"/>
</dbReference>
<dbReference type="GO" id="GO:0008285">
    <property type="term" value="P:negative regulation of cell population proliferation"/>
    <property type="evidence" value="ECO:0000250"/>
    <property type="project" value="ARUK-UCL"/>
</dbReference>
<dbReference type="GO" id="GO:0032715">
    <property type="term" value="P:negative regulation of interleukin-6 production"/>
    <property type="evidence" value="ECO:0000250"/>
    <property type="project" value="ARUK-UCL"/>
</dbReference>
<dbReference type="GO" id="GO:0002695">
    <property type="term" value="P:negative regulation of leukocyte activation"/>
    <property type="evidence" value="ECO:0000304"/>
    <property type="project" value="ARUK-UCL"/>
</dbReference>
<dbReference type="GO" id="GO:0043031">
    <property type="term" value="P:negative regulation of macrophage activation"/>
    <property type="evidence" value="ECO:0000250"/>
    <property type="project" value="ARUK-UCL"/>
</dbReference>
<dbReference type="GO" id="GO:1905522">
    <property type="term" value="P:negative regulation of macrophage migration"/>
    <property type="evidence" value="ECO:0000250"/>
    <property type="project" value="ARUK-UCL"/>
</dbReference>
<dbReference type="GO" id="GO:1904465">
    <property type="term" value="P:negative regulation of matrix metallopeptidase secretion"/>
    <property type="evidence" value="ECO:0000314"/>
    <property type="project" value="ARUK-UCL"/>
</dbReference>
<dbReference type="GO" id="GO:0150079">
    <property type="term" value="P:negative regulation of neuroinflammatory response"/>
    <property type="evidence" value="ECO:0000250"/>
    <property type="project" value="ARUK-UCL"/>
</dbReference>
<dbReference type="GO" id="GO:2000405">
    <property type="term" value="P:negative regulation of T cell migration"/>
    <property type="evidence" value="ECO:0000250"/>
    <property type="project" value="ARUK-UCL"/>
</dbReference>
<dbReference type="GO" id="GO:0043032">
    <property type="term" value="P:positive regulation of macrophage activation"/>
    <property type="evidence" value="ECO:0000316"/>
    <property type="project" value="ARUK-UCL"/>
</dbReference>
<dbReference type="GO" id="GO:0045944">
    <property type="term" value="P:positive regulation of transcription by RNA polymerase II"/>
    <property type="evidence" value="ECO:0000314"/>
    <property type="project" value="ARUK-UCL"/>
</dbReference>
<dbReference type="GO" id="GO:0071636">
    <property type="term" value="P:positive regulation of transforming growth factor beta production"/>
    <property type="evidence" value="ECO:0000316"/>
    <property type="project" value="ARUK-UCL"/>
</dbReference>
<dbReference type="GO" id="GO:0050776">
    <property type="term" value="P:regulation of immune response"/>
    <property type="evidence" value="ECO:0007669"/>
    <property type="project" value="InterPro"/>
</dbReference>
<dbReference type="GO" id="GO:0150077">
    <property type="term" value="P:regulation of neuroinflammatory response"/>
    <property type="evidence" value="ECO:0000250"/>
    <property type="project" value="ARUK-UCL"/>
</dbReference>
<dbReference type="CDD" id="cd05846">
    <property type="entry name" value="IgV_1_MRC-OX-2_like"/>
    <property type="match status" value="1"/>
</dbReference>
<dbReference type="FunFam" id="2.60.40.10:FF:001062">
    <property type="entry name" value="OX-2 membrane glycoprotein"/>
    <property type="match status" value="1"/>
</dbReference>
<dbReference type="FunFam" id="2.60.40.10:FF:001279">
    <property type="entry name" value="OX-2 membrane glycoprotein"/>
    <property type="match status" value="1"/>
</dbReference>
<dbReference type="Gene3D" id="2.60.40.10">
    <property type="entry name" value="Immunoglobulins"/>
    <property type="match status" value="2"/>
</dbReference>
<dbReference type="InterPro" id="IPR033321">
    <property type="entry name" value="CD200_Ig_V_dom"/>
</dbReference>
<dbReference type="InterPro" id="IPR007110">
    <property type="entry name" value="Ig-like_dom"/>
</dbReference>
<dbReference type="InterPro" id="IPR036179">
    <property type="entry name" value="Ig-like_dom_sf"/>
</dbReference>
<dbReference type="InterPro" id="IPR013783">
    <property type="entry name" value="Ig-like_fold"/>
</dbReference>
<dbReference type="InterPro" id="IPR003599">
    <property type="entry name" value="Ig_sub"/>
</dbReference>
<dbReference type="InterPro" id="IPR013106">
    <property type="entry name" value="Ig_V-set"/>
</dbReference>
<dbReference type="InterPro" id="IPR013151">
    <property type="entry name" value="Immunoglobulin_dom"/>
</dbReference>
<dbReference type="InterPro" id="IPR047164">
    <property type="entry name" value="OX2G-like"/>
</dbReference>
<dbReference type="PANTHER" id="PTHR46841">
    <property type="entry name" value="OX-2 MEMBRANE GLYCOPROTEIN"/>
    <property type="match status" value="1"/>
</dbReference>
<dbReference type="PANTHER" id="PTHR46841:SF3">
    <property type="entry name" value="OX-2 MEMBRANE GLYCOPROTEIN"/>
    <property type="match status" value="1"/>
</dbReference>
<dbReference type="Pfam" id="PF00047">
    <property type="entry name" value="ig"/>
    <property type="match status" value="2"/>
</dbReference>
<dbReference type="SMART" id="SM00409">
    <property type="entry name" value="IG"/>
    <property type="match status" value="1"/>
</dbReference>
<dbReference type="SMART" id="SM00406">
    <property type="entry name" value="IGv"/>
    <property type="match status" value="1"/>
</dbReference>
<dbReference type="SUPFAM" id="SSF48726">
    <property type="entry name" value="Immunoglobulin"/>
    <property type="match status" value="2"/>
</dbReference>
<dbReference type="PROSITE" id="PS50835">
    <property type="entry name" value="IG_LIKE"/>
    <property type="match status" value="1"/>
</dbReference>
<evidence type="ECO:0000255" key="1"/>
<evidence type="ECO:0000255" key="2">
    <source>
        <dbReference type="PROSITE-ProRule" id="PRU00114"/>
    </source>
</evidence>
<evidence type="ECO:0000269" key="3">
    <source>
    </source>
</evidence>
<evidence type="ECO:0000269" key="4">
    <source>
    </source>
</evidence>
<evidence type="ECO:0000269" key="5">
    <source>
    </source>
</evidence>
<evidence type="ECO:0000269" key="6">
    <source>
    </source>
</evidence>
<evidence type="ECO:0000269" key="7">
    <source ref="1"/>
</evidence>
<evidence type="ECO:0000303" key="8">
    <source>
    </source>
</evidence>
<evidence type="ECO:0000303" key="9">
    <source>
    </source>
</evidence>
<evidence type="ECO:0000303" key="10">
    <source>
    </source>
</evidence>
<evidence type="ECO:0000303" key="11">
    <source ref="1"/>
</evidence>
<evidence type="ECO:0000303" key="12">
    <source ref="2"/>
</evidence>
<evidence type="ECO:0000305" key="13"/>
<organism>
    <name type="scientific">Homo sapiens</name>
    <name type="common">Human</name>
    <dbReference type="NCBI Taxonomy" id="9606"/>
    <lineage>
        <taxon>Eukaryota</taxon>
        <taxon>Metazoa</taxon>
        <taxon>Chordata</taxon>
        <taxon>Craniata</taxon>
        <taxon>Vertebrata</taxon>
        <taxon>Euteleostomi</taxon>
        <taxon>Mammalia</taxon>
        <taxon>Eutheria</taxon>
        <taxon>Euarchontoglires</taxon>
        <taxon>Primates</taxon>
        <taxon>Haplorrhini</taxon>
        <taxon>Catarrhini</taxon>
        <taxon>Hominidae</taxon>
        <taxon>Homo</taxon>
    </lineage>
</organism>
<protein>
    <recommendedName>
        <fullName>OX-2 membrane glycoprotein</fullName>
    </recommendedName>
    <cdAntigenName>CD200</cdAntigenName>
</protein>
<sequence length="278" mass="31264">MERLVIRMPFSHLSTYSLVWVMAAVVLCTAQVQVVTQDEREQLYTPASLKCSLQNAQEALIVTWQKKKAVSPENMVTFSENHGVVIQPAYKDKINITQLGLQNSTITFWNITLEDEGCYMCLFNTFGFGKISGTACLTVYVQPIVSLHYKFSEDHLNITCSATARPAPMVFWKVPRSGIENSTVTLSHPNGTTSVTSILHIKDPKNQVGKEVICQVLHLGTVTDFKQTVNKGYWFSVPLLLSIVSLVILLVLISILLYWKRHRNQDRGELSQGVQKMT</sequence>
<accession>P41217</accession>
<accession>B3KQI1</accession>
<accession>B4DLW9</accession>
<accession>D3DN65</accession>
<accession>Q6J2Q6</accession>
<accession>Q6PIQ4</accession>
<accession>Q8TB85</accession>
<accession>Q9H3J3</accession>